<evidence type="ECO:0000255" key="1">
    <source>
        <dbReference type="HAMAP-Rule" id="MF_00093"/>
    </source>
</evidence>
<evidence type="ECO:0000256" key="2">
    <source>
        <dbReference type="SAM" id="MobiDB-lite"/>
    </source>
</evidence>
<reference key="1">
    <citation type="journal article" date="2008" name="Genome Res.">
        <title>Comparative genome analysis of Salmonella enteritidis PT4 and Salmonella gallinarum 287/91 provides insights into evolutionary and host adaptation pathways.</title>
        <authorList>
            <person name="Thomson N.R."/>
            <person name="Clayton D.J."/>
            <person name="Windhorst D."/>
            <person name="Vernikos G."/>
            <person name="Davidson S."/>
            <person name="Churcher C."/>
            <person name="Quail M.A."/>
            <person name="Stevens M."/>
            <person name="Jones M.A."/>
            <person name="Watson M."/>
            <person name="Barron A."/>
            <person name="Layton A."/>
            <person name="Pickard D."/>
            <person name="Kingsley R.A."/>
            <person name="Bignell A."/>
            <person name="Clark L."/>
            <person name="Harris B."/>
            <person name="Ormond D."/>
            <person name="Abdellah Z."/>
            <person name="Brooks K."/>
            <person name="Cherevach I."/>
            <person name="Chillingworth T."/>
            <person name="Woodward J."/>
            <person name="Norberczak H."/>
            <person name="Lord A."/>
            <person name="Arrowsmith C."/>
            <person name="Jagels K."/>
            <person name="Moule S."/>
            <person name="Mungall K."/>
            <person name="Saunders M."/>
            <person name="Whitehead S."/>
            <person name="Chabalgoity J.A."/>
            <person name="Maskell D."/>
            <person name="Humphreys T."/>
            <person name="Roberts M."/>
            <person name="Barrow P.A."/>
            <person name="Dougan G."/>
            <person name="Parkhill J."/>
        </authorList>
    </citation>
    <scope>NUCLEOTIDE SEQUENCE [LARGE SCALE GENOMIC DNA]</scope>
    <source>
        <strain>287/91 / NCTC 13346</strain>
    </source>
</reference>
<gene>
    <name evidence="1" type="primary">prfA</name>
    <name type="ordered locus">SG1341</name>
</gene>
<comment type="function">
    <text evidence="1">Peptide chain release factor 1 directs the termination of translation in response to the peptide chain termination codons UAG and UAA.</text>
</comment>
<comment type="subcellular location">
    <subcellularLocation>
        <location evidence="1">Cytoplasm</location>
    </subcellularLocation>
</comment>
<comment type="PTM">
    <text evidence="1">Methylated by PrmC. Methylation increases the termination efficiency of RF1.</text>
</comment>
<comment type="similarity">
    <text evidence="1">Belongs to the prokaryotic/mitochondrial release factor family.</text>
</comment>
<protein>
    <recommendedName>
        <fullName evidence="1">Peptide chain release factor 1</fullName>
        <shortName evidence="1">RF-1</shortName>
    </recommendedName>
</protein>
<dbReference type="EMBL" id="AM933173">
    <property type="protein sequence ID" value="CAR37217.1"/>
    <property type="molecule type" value="Genomic_DNA"/>
</dbReference>
<dbReference type="RefSeq" id="WP_000804702.1">
    <property type="nucleotide sequence ID" value="NC_011274.1"/>
</dbReference>
<dbReference type="SMR" id="B5R924"/>
<dbReference type="KEGG" id="seg:SG1341"/>
<dbReference type="HOGENOM" id="CLU_036856_0_1_6"/>
<dbReference type="Proteomes" id="UP000008321">
    <property type="component" value="Chromosome"/>
</dbReference>
<dbReference type="GO" id="GO:0005737">
    <property type="term" value="C:cytoplasm"/>
    <property type="evidence" value="ECO:0007669"/>
    <property type="project" value="UniProtKB-SubCell"/>
</dbReference>
<dbReference type="GO" id="GO:0016149">
    <property type="term" value="F:translation release factor activity, codon specific"/>
    <property type="evidence" value="ECO:0007669"/>
    <property type="project" value="UniProtKB-UniRule"/>
</dbReference>
<dbReference type="FunFam" id="3.30.160.20:FF:000004">
    <property type="entry name" value="Peptide chain release factor 1"/>
    <property type="match status" value="1"/>
</dbReference>
<dbReference type="FunFam" id="3.30.70.1660:FF:000002">
    <property type="entry name" value="Peptide chain release factor 1"/>
    <property type="match status" value="1"/>
</dbReference>
<dbReference type="FunFam" id="3.30.70.1660:FF:000004">
    <property type="entry name" value="Peptide chain release factor 1"/>
    <property type="match status" value="1"/>
</dbReference>
<dbReference type="Gene3D" id="3.30.160.20">
    <property type="match status" value="1"/>
</dbReference>
<dbReference type="Gene3D" id="3.30.70.1660">
    <property type="match status" value="2"/>
</dbReference>
<dbReference type="Gene3D" id="6.10.140.1950">
    <property type="match status" value="1"/>
</dbReference>
<dbReference type="HAMAP" id="MF_00093">
    <property type="entry name" value="Rel_fac_1"/>
    <property type="match status" value="1"/>
</dbReference>
<dbReference type="InterPro" id="IPR005139">
    <property type="entry name" value="PCRF"/>
</dbReference>
<dbReference type="InterPro" id="IPR000352">
    <property type="entry name" value="Pep_chain_release_fac_I"/>
</dbReference>
<dbReference type="InterPro" id="IPR045853">
    <property type="entry name" value="Pep_chain_release_fac_I_sf"/>
</dbReference>
<dbReference type="InterPro" id="IPR050057">
    <property type="entry name" value="Prokaryotic/Mito_RF"/>
</dbReference>
<dbReference type="InterPro" id="IPR004373">
    <property type="entry name" value="RF-1"/>
</dbReference>
<dbReference type="NCBIfam" id="TIGR00019">
    <property type="entry name" value="prfA"/>
    <property type="match status" value="1"/>
</dbReference>
<dbReference type="NCBIfam" id="NF001859">
    <property type="entry name" value="PRK00591.1"/>
    <property type="match status" value="1"/>
</dbReference>
<dbReference type="PANTHER" id="PTHR43804">
    <property type="entry name" value="LD18447P"/>
    <property type="match status" value="1"/>
</dbReference>
<dbReference type="PANTHER" id="PTHR43804:SF7">
    <property type="entry name" value="LD18447P"/>
    <property type="match status" value="1"/>
</dbReference>
<dbReference type="Pfam" id="PF03462">
    <property type="entry name" value="PCRF"/>
    <property type="match status" value="1"/>
</dbReference>
<dbReference type="Pfam" id="PF00472">
    <property type="entry name" value="RF-1"/>
    <property type="match status" value="1"/>
</dbReference>
<dbReference type="SMART" id="SM00937">
    <property type="entry name" value="PCRF"/>
    <property type="match status" value="1"/>
</dbReference>
<dbReference type="SUPFAM" id="SSF75620">
    <property type="entry name" value="Release factor"/>
    <property type="match status" value="1"/>
</dbReference>
<dbReference type="PROSITE" id="PS00745">
    <property type="entry name" value="RF_PROK_I"/>
    <property type="match status" value="1"/>
</dbReference>
<accession>B5R924</accession>
<feature type="chain" id="PRO_1000093499" description="Peptide chain release factor 1">
    <location>
        <begin position="1"/>
        <end position="360"/>
    </location>
</feature>
<feature type="region of interest" description="Disordered" evidence="2">
    <location>
        <begin position="284"/>
        <end position="313"/>
    </location>
</feature>
<feature type="modified residue" description="N5-methylglutamine" evidence="1">
    <location>
        <position position="235"/>
    </location>
</feature>
<organism>
    <name type="scientific">Salmonella gallinarum (strain 287/91 / NCTC 13346)</name>
    <dbReference type="NCBI Taxonomy" id="550538"/>
    <lineage>
        <taxon>Bacteria</taxon>
        <taxon>Pseudomonadati</taxon>
        <taxon>Pseudomonadota</taxon>
        <taxon>Gammaproteobacteria</taxon>
        <taxon>Enterobacterales</taxon>
        <taxon>Enterobacteriaceae</taxon>
        <taxon>Salmonella</taxon>
    </lineage>
</organism>
<proteinExistence type="inferred from homology"/>
<keyword id="KW-0963">Cytoplasm</keyword>
<keyword id="KW-0488">Methylation</keyword>
<keyword id="KW-0648">Protein biosynthesis</keyword>
<sequence length="360" mass="40446">MKPSIVAKLEALHERHEEVQALLGDAGIIADQDRFRALSREYAQLSDVSRCFTDWQQVQDDIETAQMMLDDPEMREMAQEELREAKEKSEQLEQQLQVLLLPKDPDDERNAFLEVRAGTGGDEAALFAGDLFRMYSRYAEARRWRVEIMSMSEGEHGGYKEIIAKISGDGVYGRLKFESGGHRVQRVPATESQGRIHTSACTVAVMPELPEAELPDINPADLRIDTFRSSGAGGQHVNTTDSAIRITHLPTGIVVECQDERSQHKNKAKALSVLGARIHAAETAKRQQAEASTRRNLLGSGDRSDRNRTYNFPQGRVTDHRINLTLYRLDETMEGKLDMLIEPIVQEHLADLLAALSEQE</sequence>
<name>RF1_SALG2</name>